<comment type="catalytic activity">
    <reaction evidence="1">
        <text>1-(5-phospho-beta-D-ribosyl)-ATP + H2O = 1-(5-phospho-beta-D-ribosyl)-5'-AMP + diphosphate + H(+)</text>
        <dbReference type="Rhea" id="RHEA:22828"/>
        <dbReference type="ChEBI" id="CHEBI:15377"/>
        <dbReference type="ChEBI" id="CHEBI:15378"/>
        <dbReference type="ChEBI" id="CHEBI:33019"/>
        <dbReference type="ChEBI" id="CHEBI:59457"/>
        <dbReference type="ChEBI" id="CHEBI:73183"/>
        <dbReference type="EC" id="3.6.1.31"/>
    </reaction>
</comment>
<comment type="pathway">
    <text evidence="1">Amino-acid biosynthesis; L-histidine biosynthesis; L-histidine from 5-phospho-alpha-D-ribose 1-diphosphate: step 2/9.</text>
</comment>
<comment type="subcellular location">
    <subcellularLocation>
        <location evidence="1">Cytoplasm</location>
    </subcellularLocation>
</comment>
<comment type="similarity">
    <text evidence="1">Belongs to the PRA-PH family.</text>
</comment>
<keyword id="KW-0028">Amino-acid biosynthesis</keyword>
<keyword id="KW-0067">ATP-binding</keyword>
<keyword id="KW-0963">Cytoplasm</keyword>
<keyword id="KW-0368">Histidine biosynthesis</keyword>
<keyword id="KW-0378">Hydrolase</keyword>
<keyword id="KW-0547">Nucleotide-binding</keyword>
<evidence type="ECO:0000255" key="1">
    <source>
        <dbReference type="HAMAP-Rule" id="MF_01020"/>
    </source>
</evidence>
<gene>
    <name evidence="1" type="primary">hisE</name>
    <name type="ordered locus">M1425_1534</name>
</gene>
<accession>C3MW61</accession>
<name>HIS2_SACI4</name>
<sequence>MSNEIVDKLYKVILDRIEKRPTGSYTAEIVNKGKAYVARKVGEESVETIVASLAENKERFISEVADLIYHLLVLMALEGVTPDDIYRELERRRK</sequence>
<reference key="1">
    <citation type="journal article" date="2009" name="Proc. Natl. Acad. Sci. U.S.A.">
        <title>Biogeography of the Sulfolobus islandicus pan-genome.</title>
        <authorList>
            <person name="Reno M.L."/>
            <person name="Held N.L."/>
            <person name="Fields C.J."/>
            <person name="Burke P.V."/>
            <person name="Whitaker R.J."/>
        </authorList>
    </citation>
    <scope>NUCLEOTIDE SEQUENCE [LARGE SCALE GENOMIC DNA]</scope>
    <source>
        <strain>M.14.25 / Kamchatka #1</strain>
    </source>
</reference>
<feature type="chain" id="PRO_1000213293" description="Phosphoribosyl-ATP pyrophosphatase">
    <location>
        <begin position="1"/>
        <end position="94"/>
    </location>
</feature>
<proteinExistence type="inferred from homology"/>
<protein>
    <recommendedName>
        <fullName evidence="1">Phosphoribosyl-ATP pyrophosphatase</fullName>
        <shortName evidence="1">PRA-PH</shortName>
        <ecNumber evidence="1">3.6.1.31</ecNumber>
    </recommendedName>
</protein>
<organism>
    <name type="scientific">Saccharolobus islandicus (strain M.14.25 / Kamchatka #1)</name>
    <name type="common">Sulfolobus islandicus</name>
    <dbReference type="NCBI Taxonomy" id="427317"/>
    <lineage>
        <taxon>Archaea</taxon>
        <taxon>Thermoproteota</taxon>
        <taxon>Thermoprotei</taxon>
        <taxon>Sulfolobales</taxon>
        <taxon>Sulfolobaceae</taxon>
        <taxon>Saccharolobus</taxon>
    </lineage>
</organism>
<dbReference type="EC" id="3.6.1.31" evidence="1"/>
<dbReference type="EMBL" id="CP001400">
    <property type="protein sequence ID" value="ACP38283.1"/>
    <property type="molecule type" value="Genomic_DNA"/>
</dbReference>
<dbReference type="RefSeq" id="WP_012711528.1">
    <property type="nucleotide sequence ID" value="NC_012588.1"/>
</dbReference>
<dbReference type="SMR" id="C3MW61"/>
<dbReference type="GeneID" id="84061845"/>
<dbReference type="KEGG" id="sia:M1425_1534"/>
<dbReference type="HOGENOM" id="CLU_123337_0_0_2"/>
<dbReference type="UniPathway" id="UPA00031">
    <property type="reaction ID" value="UER00007"/>
</dbReference>
<dbReference type="Proteomes" id="UP000001350">
    <property type="component" value="Chromosome"/>
</dbReference>
<dbReference type="GO" id="GO:0005737">
    <property type="term" value="C:cytoplasm"/>
    <property type="evidence" value="ECO:0007669"/>
    <property type="project" value="UniProtKB-SubCell"/>
</dbReference>
<dbReference type="GO" id="GO:0005524">
    <property type="term" value="F:ATP binding"/>
    <property type="evidence" value="ECO:0007669"/>
    <property type="project" value="UniProtKB-KW"/>
</dbReference>
<dbReference type="GO" id="GO:0004636">
    <property type="term" value="F:phosphoribosyl-ATP diphosphatase activity"/>
    <property type="evidence" value="ECO:0007669"/>
    <property type="project" value="UniProtKB-UniRule"/>
</dbReference>
<dbReference type="GO" id="GO:0000105">
    <property type="term" value="P:L-histidine biosynthetic process"/>
    <property type="evidence" value="ECO:0007669"/>
    <property type="project" value="UniProtKB-UniRule"/>
</dbReference>
<dbReference type="CDD" id="cd11534">
    <property type="entry name" value="NTP-PPase_HisIE_like"/>
    <property type="match status" value="1"/>
</dbReference>
<dbReference type="Gene3D" id="1.10.287.1080">
    <property type="entry name" value="MazG-like"/>
    <property type="match status" value="1"/>
</dbReference>
<dbReference type="HAMAP" id="MF_01020">
    <property type="entry name" value="HisE"/>
    <property type="match status" value="1"/>
</dbReference>
<dbReference type="InterPro" id="IPR008179">
    <property type="entry name" value="HisE"/>
</dbReference>
<dbReference type="InterPro" id="IPR021130">
    <property type="entry name" value="PRib-ATP_PPHydrolase-like"/>
</dbReference>
<dbReference type="NCBIfam" id="TIGR03188">
    <property type="entry name" value="histidine_hisI"/>
    <property type="match status" value="1"/>
</dbReference>
<dbReference type="PANTHER" id="PTHR42945">
    <property type="entry name" value="HISTIDINE BIOSYNTHESIS BIFUNCTIONAL PROTEIN"/>
    <property type="match status" value="1"/>
</dbReference>
<dbReference type="PANTHER" id="PTHR42945:SF1">
    <property type="entry name" value="HISTIDINE BIOSYNTHESIS BIFUNCTIONAL PROTEIN HIS7"/>
    <property type="match status" value="1"/>
</dbReference>
<dbReference type="Pfam" id="PF01503">
    <property type="entry name" value="PRA-PH"/>
    <property type="match status" value="1"/>
</dbReference>
<dbReference type="SUPFAM" id="SSF101386">
    <property type="entry name" value="all-alpha NTP pyrophosphatases"/>
    <property type="match status" value="1"/>
</dbReference>